<dbReference type="EMBL" id="CP000350">
    <property type="protein sequence ID" value="ABJ74889.1"/>
    <property type="molecule type" value="Genomic_DNA"/>
</dbReference>
<dbReference type="KEGG" id="lbj:LBJ_0146"/>
<dbReference type="HOGENOM" id="CLU_144811_6_0_12"/>
<dbReference type="Proteomes" id="UP000000656">
    <property type="component" value="Chromosome 1"/>
</dbReference>
<dbReference type="GO" id="GO:0005886">
    <property type="term" value="C:plasma membrane"/>
    <property type="evidence" value="ECO:0007669"/>
    <property type="project" value="UniProtKB-SubCell"/>
</dbReference>
<dbReference type="HAMAP" id="MF_00386">
    <property type="entry name" value="UPF0161_YidD"/>
    <property type="match status" value="1"/>
</dbReference>
<dbReference type="InterPro" id="IPR002696">
    <property type="entry name" value="Membr_insert_effic_factor_YidD"/>
</dbReference>
<dbReference type="NCBIfam" id="TIGR00278">
    <property type="entry name" value="membrane protein insertion efficiency factor YidD"/>
    <property type="match status" value="1"/>
</dbReference>
<dbReference type="PANTHER" id="PTHR33383">
    <property type="entry name" value="MEMBRANE PROTEIN INSERTION EFFICIENCY FACTOR-RELATED"/>
    <property type="match status" value="1"/>
</dbReference>
<dbReference type="PANTHER" id="PTHR33383:SF1">
    <property type="entry name" value="MEMBRANE PROTEIN INSERTION EFFICIENCY FACTOR-RELATED"/>
    <property type="match status" value="1"/>
</dbReference>
<dbReference type="Pfam" id="PF01809">
    <property type="entry name" value="YidD"/>
    <property type="match status" value="1"/>
</dbReference>
<dbReference type="SMART" id="SM01234">
    <property type="entry name" value="Haemolytic"/>
    <property type="match status" value="1"/>
</dbReference>
<proteinExistence type="inferred from homology"/>
<accession>Q04W31</accession>
<organism>
    <name type="scientific">Leptospira borgpetersenii serovar Hardjo-bovis (strain JB197)</name>
    <dbReference type="NCBI Taxonomy" id="355277"/>
    <lineage>
        <taxon>Bacteria</taxon>
        <taxon>Pseudomonadati</taxon>
        <taxon>Spirochaetota</taxon>
        <taxon>Spirochaetia</taxon>
        <taxon>Leptospirales</taxon>
        <taxon>Leptospiraceae</taxon>
        <taxon>Leptospira</taxon>
    </lineage>
</organism>
<name>YIDD_LEPBJ</name>
<sequence length="84" mass="9692">MNQLVIQLIQLYKKIISPLLPPACRFTPTCSEYTIQAFRECGFFQAIQLSAWRILRCNPLSQGFEDPLPPNTKRTNLTHGRQTK</sequence>
<keyword id="KW-0997">Cell inner membrane</keyword>
<keyword id="KW-1003">Cell membrane</keyword>
<keyword id="KW-0472">Membrane</keyword>
<comment type="function">
    <text evidence="1">Could be involved in insertion of integral membrane proteins into the membrane.</text>
</comment>
<comment type="subcellular location">
    <subcellularLocation>
        <location evidence="1">Cell inner membrane</location>
        <topology evidence="1">Peripheral membrane protein</topology>
        <orientation evidence="1">Cytoplasmic side</orientation>
    </subcellularLocation>
</comment>
<comment type="similarity">
    <text evidence="1">Belongs to the UPF0161 family.</text>
</comment>
<protein>
    <recommendedName>
        <fullName evidence="1">Putative membrane protein insertion efficiency factor</fullName>
    </recommendedName>
</protein>
<evidence type="ECO:0000255" key="1">
    <source>
        <dbReference type="HAMAP-Rule" id="MF_00386"/>
    </source>
</evidence>
<evidence type="ECO:0000256" key="2">
    <source>
        <dbReference type="SAM" id="MobiDB-lite"/>
    </source>
</evidence>
<gene>
    <name type="ordered locus">LBJ_0146</name>
</gene>
<reference key="1">
    <citation type="journal article" date="2006" name="Proc. Natl. Acad. Sci. U.S.A.">
        <title>Genome reduction in Leptospira borgpetersenii reflects limited transmission potential.</title>
        <authorList>
            <person name="Bulach D.M."/>
            <person name="Zuerner R.L."/>
            <person name="Wilson P."/>
            <person name="Seemann T."/>
            <person name="McGrath A."/>
            <person name="Cullen P.A."/>
            <person name="Davis J."/>
            <person name="Johnson M."/>
            <person name="Kuczek E."/>
            <person name="Alt D.P."/>
            <person name="Peterson-Burch B."/>
            <person name="Coppel R.L."/>
            <person name="Rood J.I."/>
            <person name="Davies J.K."/>
            <person name="Adler B."/>
        </authorList>
    </citation>
    <scope>NUCLEOTIDE SEQUENCE [LARGE SCALE GENOMIC DNA]</scope>
    <source>
        <strain>JB197</strain>
    </source>
</reference>
<feature type="chain" id="PRO_1000013098" description="Putative membrane protein insertion efficiency factor">
    <location>
        <begin position="1"/>
        <end position="84"/>
    </location>
</feature>
<feature type="region of interest" description="Disordered" evidence="2">
    <location>
        <begin position="61"/>
        <end position="84"/>
    </location>
</feature>
<feature type="compositionally biased region" description="Polar residues" evidence="2">
    <location>
        <begin position="72"/>
        <end position="84"/>
    </location>
</feature>